<evidence type="ECO:0000255" key="1">
    <source>
        <dbReference type="PROSITE-ProRule" id="PRU00339"/>
    </source>
</evidence>
<evidence type="ECO:0000256" key="2">
    <source>
        <dbReference type="SAM" id="MobiDB-lite"/>
    </source>
</evidence>
<evidence type="ECO:0000303" key="3">
    <source>
    </source>
</evidence>
<evidence type="ECO:0000303" key="4">
    <source ref="1"/>
</evidence>
<evidence type="ECO:0000305" key="5"/>
<evidence type="ECO:0000312" key="6">
    <source>
        <dbReference type="Araport" id="AT3G27960"/>
    </source>
</evidence>
<evidence type="ECO:0000312" key="7">
    <source>
        <dbReference type="EMBL" id="BAB01483.1"/>
    </source>
</evidence>
<evidence type="ECO:0007744" key="8">
    <source>
    </source>
</evidence>
<protein>
    <recommendedName>
        <fullName evidence="3">Protein KINESIN LIGHT CHAIN-RELATED 2</fullName>
    </recommendedName>
    <alternativeName>
        <fullName evidence="4">Kinesin light chain-like protein 1</fullName>
        <shortName evidence="4">AtKLC1</shortName>
    </alternativeName>
</protein>
<accession>Q9LII8</accession>
<accession>Q7XA91</accession>
<gene>
    <name evidence="3" type="primary">KLCR2</name>
    <name evidence="4" type="synonym">KLC1</name>
    <name evidence="6" type="ordered locus">At3g27960</name>
    <name evidence="7" type="ORF">K24A2.5</name>
</gene>
<feature type="chain" id="PRO_0000438248" description="Protein KINESIN LIGHT CHAIN-RELATED 2">
    <location>
        <begin position="1"/>
        <end position="663"/>
    </location>
</feature>
<feature type="repeat" description="TPR 1" evidence="1">
    <location>
        <begin position="147"/>
        <end position="181"/>
    </location>
</feature>
<feature type="repeat" description="TPR 2" evidence="1">
    <location>
        <begin position="200"/>
        <end position="233"/>
    </location>
</feature>
<feature type="repeat" description="TPR 3" evidence="1">
    <location>
        <begin position="243"/>
        <end position="276"/>
    </location>
</feature>
<feature type="repeat" description="TPR 4" evidence="1">
    <location>
        <begin position="285"/>
        <end position="318"/>
    </location>
</feature>
<feature type="repeat" description="TPR 5" evidence="1">
    <location>
        <begin position="329"/>
        <end position="363"/>
    </location>
</feature>
<feature type="repeat" description="TPR 6" evidence="1">
    <location>
        <begin position="369"/>
        <end position="402"/>
    </location>
</feature>
<feature type="repeat" description="TPR 7" evidence="1">
    <location>
        <begin position="411"/>
        <end position="444"/>
    </location>
</feature>
<feature type="repeat" description="TPR 8" evidence="1">
    <location>
        <begin position="454"/>
        <end position="487"/>
    </location>
</feature>
<feature type="repeat" description="TPR 9" evidence="1">
    <location>
        <begin position="495"/>
        <end position="528"/>
    </location>
</feature>
<feature type="repeat" description="TPR 10" evidence="1">
    <location>
        <begin position="537"/>
        <end position="570"/>
    </location>
</feature>
<feature type="repeat" description="TPR 11" evidence="1">
    <location>
        <begin position="579"/>
        <end position="612"/>
    </location>
</feature>
<feature type="region of interest" description="Disordered" evidence="2">
    <location>
        <begin position="1"/>
        <end position="24"/>
    </location>
</feature>
<feature type="region of interest" description="Disordered" evidence="2">
    <location>
        <begin position="86"/>
        <end position="146"/>
    </location>
</feature>
<feature type="compositionally biased region" description="Basic and acidic residues" evidence="2">
    <location>
        <begin position="1"/>
        <end position="14"/>
    </location>
</feature>
<feature type="compositionally biased region" description="Basic and acidic residues" evidence="2">
    <location>
        <begin position="86"/>
        <end position="100"/>
    </location>
</feature>
<feature type="compositionally biased region" description="Polar residues" evidence="2">
    <location>
        <begin position="102"/>
        <end position="111"/>
    </location>
</feature>
<feature type="modified residue" description="Phosphoserine" evidence="8">
    <location>
        <position position="19"/>
    </location>
</feature>
<feature type="sequence conflict" description="In Ref. 4; AAQ22597 and 5; BAE99464." evidence="5" ref="4 5">
    <original>E</original>
    <variation>G</variation>
    <location>
        <position position="224"/>
    </location>
</feature>
<sequence length="663" mass="72515">MDVGESNERVKDDSALQASPRSPLSSIDLAIDGAMNASIEQLYHNVCEMESSDDQSPSRASFISYGAESRIDLELRHLVGDVGEEGESKKEIILEKKEESNGEGSLSQKKPLSNGKKVAKTSPNNPKMPGSRISSRKSPDLGKVSVDEESPELGVVLLKQARELVSSGENLNKALDLALRAVKVFEKCGEGEKQLGLNLVMSLHILAAIYAGLGRYNDAVPVLERSIEIPMIEDGEDHALAKFAGCMQLGDMYGLMGQVENSIMLYTAGLEIQRQVLGESDARVGETCRYLAEAHVQAMQFEEASRLCQMALDIHKENGAAATASIEEAADRKLMGLICDAKGDYEVALEHYVLASMAMSSQNHREDVAAVDCSIGDAYMSLARFDEAIFAYQKALAVFKQGKGETHSSVALVYVRLADLYNKIGKTRDSKSYCENALKIYLKPTPGTPMEEVATGFIEISAIYQSMNELDQALKLLRRALKIYANAPGQQNTIAGIEAQMGVVTYMMGNYSESYDIFKSAISKFRNSGEKKTALFGIALNQMGLACVQRYAINEAADLFEEAKTILEKECGPYHPDTLAVYSNLAGTYDAMGRLDDAIEILEYVVGTREEKLGTANPEVEDEKQRLAALLKEAGRGRSKRNRALLTLLDNNPEIANGQRPVY</sequence>
<dbReference type="EMBL" id="AY462123">
    <property type="protein sequence ID" value="AAS44558.1"/>
    <property type="molecule type" value="mRNA"/>
</dbReference>
<dbReference type="EMBL" id="AP001302">
    <property type="protein sequence ID" value="BAB01483.1"/>
    <property type="molecule type" value="Genomic_DNA"/>
</dbReference>
<dbReference type="EMBL" id="CP002686">
    <property type="protein sequence ID" value="AEE77386.1"/>
    <property type="molecule type" value="Genomic_DNA"/>
</dbReference>
<dbReference type="EMBL" id="CP002686">
    <property type="protein sequence ID" value="ANM63950.1"/>
    <property type="molecule type" value="Genomic_DNA"/>
</dbReference>
<dbReference type="EMBL" id="BT010128">
    <property type="protein sequence ID" value="AAQ22597.1"/>
    <property type="molecule type" value="mRNA"/>
</dbReference>
<dbReference type="EMBL" id="AK227461">
    <property type="protein sequence ID" value="BAE99464.1"/>
    <property type="molecule type" value="mRNA"/>
</dbReference>
<dbReference type="RefSeq" id="NP_001326010.1">
    <property type="nucleotide sequence ID" value="NM_001338927.1"/>
</dbReference>
<dbReference type="RefSeq" id="NP_189435.1">
    <property type="nucleotide sequence ID" value="NM_113713.4"/>
</dbReference>
<dbReference type="SMR" id="Q9LII8"/>
<dbReference type="FunCoup" id="Q9LII8">
    <property type="interactions" value="20"/>
</dbReference>
<dbReference type="IntAct" id="Q9LII8">
    <property type="interactions" value="74"/>
</dbReference>
<dbReference type="STRING" id="3702.Q9LII8"/>
<dbReference type="GlyGen" id="Q9LII8">
    <property type="glycosylation" value="1 site"/>
</dbReference>
<dbReference type="iPTMnet" id="Q9LII8"/>
<dbReference type="PaxDb" id="3702-AT3G27960.1"/>
<dbReference type="ProteomicsDB" id="230372"/>
<dbReference type="EnsemblPlants" id="AT3G27960.1">
    <property type="protein sequence ID" value="AT3G27960.1"/>
    <property type="gene ID" value="AT3G27960"/>
</dbReference>
<dbReference type="EnsemblPlants" id="AT3G27960.3">
    <property type="protein sequence ID" value="AT3G27960.3"/>
    <property type="gene ID" value="AT3G27960"/>
</dbReference>
<dbReference type="GeneID" id="822420"/>
<dbReference type="Gramene" id="AT3G27960.1">
    <property type="protein sequence ID" value="AT3G27960.1"/>
    <property type="gene ID" value="AT3G27960"/>
</dbReference>
<dbReference type="Gramene" id="AT3G27960.3">
    <property type="protein sequence ID" value="AT3G27960.3"/>
    <property type="gene ID" value="AT3G27960"/>
</dbReference>
<dbReference type="KEGG" id="ath:AT3G27960"/>
<dbReference type="Araport" id="AT3G27960"/>
<dbReference type="TAIR" id="AT3G27960">
    <property type="gene designation" value="KLCR2"/>
</dbReference>
<dbReference type="eggNOG" id="KOG1840">
    <property type="taxonomic scope" value="Eukaryota"/>
</dbReference>
<dbReference type="HOGENOM" id="CLU_021284_1_0_1"/>
<dbReference type="InParanoid" id="Q9LII8"/>
<dbReference type="OMA" id="KEYGPCH"/>
<dbReference type="PhylomeDB" id="Q9LII8"/>
<dbReference type="PRO" id="PR:Q9LII8"/>
<dbReference type="Proteomes" id="UP000006548">
    <property type="component" value="Chromosome 3"/>
</dbReference>
<dbReference type="ExpressionAtlas" id="Q9LII8">
    <property type="expression patterns" value="baseline and differential"/>
</dbReference>
<dbReference type="GO" id="GO:0009860">
    <property type="term" value="P:pollen tube growth"/>
    <property type="evidence" value="ECO:0000270"/>
    <property type="project" value="TAIR"/>
</dbReference>
<dbReference type="GO" id="GO:0031347">
    <property type="term" value="P:regulation of defense response"/>
    <property type="evidence" value="ECO:0000315"/>
    <property type="project" value="TAIR"/>
</dbReference>
<dbReference type="FunFam" id="1.25.40.10:FF:000593">
    <property type="entry name" value="Protein KINESIN LIGHT CHAIN-RELATED 1"/>
    <property type="match status" value="1"/>
</dbReference>
<dbReference type="FunFam" id="1.25.40.10:FF:001025">
    <property type="entry name" value="Protein KINESIN LIGHT CHAIN-RELATED 2"/>
    <property type="match status" value="1"/>
</dbReference>
<dbReference type="Gene3D" id="1.25.40.10">
    <property type="entry name" value="Tetratricopeptide repeat domain"/>
    <property type="match status" value="3"/>
</dbReference>
<dbReference type="InterPro" id="IPR011990">
    <property type="entry name" value="TPR-like_helical_dom_sf"/>
</dbReference>
<dbReference type="InterPro" id="IPR019734">
    <property type="entry name" value="TPR_rpt"/>
</dbReference>
<dbReference type="PANTHER" id="PTHR46284:SF1">
    <property type="entry name" value="PROTEIN KINESIN LIGHT CHAIN-RELATED 2"/>
    <property type="match status" value="1"/>
</dbReference>
<dbReference type="PANTHER" id="PTHR46284">
    <property type="entry name" value="PROTEIN KINESIN LIGHT CHAIN-RELATED 3"/>
    <property type="match status" value="1"/>
</dbReference>
<dbReference type="Pfam" id="PF13374">
    <property type="entry name" value="TPR_10"/>
    <property type="match status" value="2"/>
</dbReference>
<dbReference type="Pfam" id="PF13424">
    <property type="entry name" value="TPR_12"/>
    <property type="match status" value="2"/>
</dbReference>
<dbReference type="SMART" id="SM00028">
    <property type="entry name" value="TPR"/>
    <property type="match status" value="10"/>
</dbReference>
<dbReference type="SUPFAM" id="SSF48452">
    <property type="entry name" value="TPR-like"/>
    <property type="match status" value="1"/>
</dbReference>
<dbReference type="PROSITE" id="PS50005">
    <property type="entry name" value="TPR"/>
    <property type="match status" value="8"/>
</dbReference>
<dbReference type="PROSITE" id="PS50293">
    <property type="entry name" value="TPR_REGION"/>
    <property type="match status" value="2"/>
</dbReference>
<proteinExistence type="evidence at protein level"/>
<name>KLCR2_ARATH</name>
<keyword id="KW-0597">Phosphoprotein</keyword>
<keyword id="KW-1185">Reference proteome</keyword>
<keyword id="KW-0677">Repeat</keyword>
<keyword id="KW-0802">TPR repeat</keyword>
<comment type="similarity">
    <text evidence="5">Belongs to the kinesin light chain family.</text>
</comment>
<reference key="1">
    <citation type="submission" date="2003-11" db="EMBL/GenBank/DDBJ databases">
        <title>Kinesin light chain-like protein from Arabidopsis thaliana.</title>
        <authorList>
            <person name="Leivar P."/>
            <person name="Boronat A."/>
            <person name="Campos N."/>
        </authorList>
    </citation>
    <scope>NUCLEOTIDE SEQUENCE [MRNA]</scope>
    <source>
        <strain>cv. Columbia</strain>
    </source>
</reference>
<reference key="2">
    <citation type="journal article" date="2000" name="DNA Res.">
        <title>Structural analysis of Arabidopsis thaliana chromosome 3. II. Sequence features of the 4,251,695 bp regions covered by 90 P1, TAC and BAC clones.</title>
        <authorList>
            <person name="Kaneko T."/>
            <person name="Katoh T."/>
            <person name="Sato S."/>
            <person name="Nakamura Y."/>
            <person name="Asamizu E."/>
            <person name="Tabata S."/>
        </authorList>
    </citation>
    <scope>NUCLEOTIDE SEQUENCE [LARGE SCALE GENOMIC DNA]</scope>
    <source>
        <strain>cv. Columbia</strain>
    </source>
</reference>
<reference key="3">
    <citation type="journal article" date="2017" name="Plant J.">
        <title>Araport11: a complete reannotation of the Arabidopsis thaliana reference genome.</title>
        <authorList>
            <person name="Cheng C.Y."/>
            <person name="Krishnakumar V."/>
            <person name="Chan A.P."/>
            <person name="Thibaud-Nissen F."/>
            <person name="Schobel S."/>
            <person name="Town C.D."/>
        </authorList>
    </citation>
    <scope>GENOME REANNOTATION</scope>
    <source>
        <strain>cv. Columbia</strain>
    </source>
</reference>
<reference key="4">
    <citation type="journal article" date="2003" name="Science">
        <title>Empirical analysis of transcriptional activity in the Arabidopsis genome.</title>
        <authorList>
            <person name="Yamada K."/>
            <person name="Lim J."/>
            <person name="Dale J.M."/>
            <person name="Chen H."/>
            <person name="Shinn P."/>
            <person name="Palm C.J."/>
            <person name="Southwick A.M."/>
            <person name="Wu H.C."/>
            <person name="Kim C.J."/>
            <person name="Nguyen M."/>
            <person name="Pham P.K."/>
            <person name="Cheuk R.F."/>
            <person name="Karlin-Newmann G."/>
            <person name="Liu S.X."/>
            <person name="Lam B."/>
            <person name="Sakano H."/>
            <person name="Wu T."/>
            <person name="Yu G."/>
            <person name="Miranda M."/>
            <person name="Quach H.L."/>
            <person name="Tripp M."/>
            <person name="Chang C.H."/>
            <person name="Lee J.M."/>
            <person name="Toriumi M.J."/>
            <person name="Chan M.M."/>
            <person name="Tang C.C."/>
            <person name="Onodera C.S."/>
            <person name="Deng J.M."/>
            <person name="Akiyama K."/>
            <person name="Ansari Y."/>
            <person name="Arakawa T."/>
            <person name="Banh J."/>
            <person name="Banno F."/>
            <person name="Bowser L."/>
            <person name="Brooks S.Y."/>
            <person name="Carninci P."/>
            <person name="Chao Q."/>
            <person name="Choy N."/>
            <person name="Enju A."/>
            <person name="Goldsmith A.D."/>
            <person name="Gurjal M."/>
            <person name="Hansen N.F."/>
            <person name="Hayashizaki Y."/>
            <person name="Johnson-Hopson C."/>
            <person name="Hsuan V.W."/>
            <person name="Iida K."/>
            <person name="Karnes M."/>
            <person name="Khan S."/>
            <person name="Koesema E."/>
            <person name="Ishida J."/>
            <person name="Jiang P.X."/>
            <person name="Jones T."/>
            <person name="Kawai J."/>
            <person name="Kamiya A."/>
            <person name="Meyers C."/>
            <person name="Nakajima M."/>
            <person name="Narusaka M."/>
            <person name="Seki M."/>
            <person name="Sakurai T."/>
            <person name="Satou M."/>
            <person name="Tamse R."/>
            <person name="Vaysberg M."/>
            <person name="Wallender E.K."/>
            <person name="Wong C."/>
            <person name="Yamamura Y."/>
            <person name="Yuan S."/>
            <person name="Shinozaki K."/>
            <person name="Davis R.W."/>
            <person name="Theologis A."/>
            <person name="Ecker J.R."/>
        </authorList>
    </citation>
    <scope>NUCLEOTIDE SEQUENCE [LARGE SCALE MRNA]</scope>
    <source>
        <strain>cv. Columbia</strain>
    </source>
</reference>
<reference key="5">
    <citation type="submission" date="2006-07" db="EMBL/GenBank/DDBJ databases">
        <title>Large-scale analysis of RIKEN Arabidopsis full-length (RAFL) cDNAs.</title>
        <authorList>
            <person name="Totoki Y."/>
            <person name="Seki M."/>
            <person name="Ishida J."/>
            <person name="Nakajima M."/>
            <person name="Enju A."/>
            <person name="Kamiya A."/>
            <person name="Narusaka M."/>
            <person name="Shin-i T."/>
            <person name="Nakagawa M."/>
            <person name="Sakamoto N."/>
            <person name="Oishi K."/>
            <person name="Kohara Y."/>
            <person name="Kobayashi M."/>
            <person name="Toyoda A."/>
            <person name="Sakaki Y."/>
            <person name="Sakurai T."/>
            <person name="Iida K."/>
            <person name="Akiyama K."/>
            <person name="Satou M."/>
            <person name="Toyoda T."/>
            <person name="Konagaya A."/>
            <person name="Carninci P."/>
            <person name="Kawai J."/>
            <person name="Hayashizaki Y."/>
            <person name="Shinozaki K."/>
        </authorList>
    </citation>
    <scope>NUCLEOTIDE SEQUENCE [LARGE SCALE MRNA]</scope>
    <source>
        <strain>cv. Columbia</strain>
    </source>
</reference>
<reference key="6">
    <citation type="journal article" date="2009" name="Plant Physiol.">
        <title>Large-scale Arabidopsis phosphoproteome profiling reveals novel chloroplast kinase substrates and phosphorylation networks.</title>
        <authorList>
            <person name="Reiland S."/>
            <person name="Messerli G."/>
            <person name="Baerenfaller K."/>
            <person name="Gerrits B."/>
            <person name="Endler A."/>
            <person name="Grossmann J."/>
            <person name="Gruissem W."/>
            <person name="Baginsky S."/>
        </authorList>
    </citation>
    <scope>PHOSPHORYLATION [LARGE SCALE ANALYSIS] AT SER-19</scope>
    <scope>IDENTIFICATION BY MASS SPECTROMETRY [LARGE SCALE ANALYSIS]</scope>
</reference>
<reference key="7">
    <citation type="journal article" date="2013" name="J. Biol. Chem.">
        <title>Arabidopsis calmodulin-binding protein IQ67-domain 1 localizes to microtubules and interacts with kinesin light chain-related protein-1.</title>
        <authorList>
            <person name="Buerstenbinder K."/>
            <person name="Savchenko T."/>
            <person name="Mueller J."/>
            <person name="Adamson A.W."/>
            <person name="Stamm G."/>
            <person name="Kwong R."/>
            <person name="Zipp B.J."/>
            <person name="Dinesh D.C."/>
            <person name="Abel S."/>
        </authorList>
    </citation>
    <scope>GENE FAMILY</scope>
    <scope>NOMENCLATURE</scope>
</reference>
<organism>
    <name type="scientific">Arabidopsis thaliana</name>
    <name type="common">Mouse-ear cress</name>
    <dbReference type="NCBI Taxonomy" id="3702"/>
    <lineage>
        <taxon>Eukaryota</taxon>
        <taxon>Viridiplantae</taxon>
        <taxon>Streptophyta</taxon>
        <taxon>Embryophyta</taxon>
        <taxon>Tracheophyta</taxon>
        <taxon>Spermatophyta</taxon>
        <taxon>Magnoliopsida</taxon>
        <taxon>eudicotyledons</taxon>
        <taxon>Gunneridae</taxon>
        <taxon>Pentapetalae</taxon>
        <taxon>rosids</taxon>
        <taxon>malvids</taxon>
        <taxon>Brassicales</taxon>
        <taxon>Brassicaceae</taxon>
        <taxon>Camelineae</taxon>
        <taxon>Arabidopsis</taxon>
    </lineage>
</organism>